<evidence type="ECO:0000250" key="1"/>
<evidence type="ECO:0000256" key="2">
    <source>
        <dbReference type="SAM" id="MobiDB-lite"/>
    </source>
</evidence>
<evidence type="ECO:0000305" key="3"/>
<feature type="chain" id="PRO_0000248992" description="Peptide-N(4)-(N-acetyl-beta-glucosaminyl)asparagine amidase">
    <location>
        <begin position="1"/>
        <end position="353"/>
    </location>
</feature>
<feature type="region of interest" description="Disordered" evidence="2">
    <location>
        <begin position="316"/>
        <end position="353"/>
    </location>
</feature>
<feature type="compositionally biased region" description="Low complexity" evidence="2">
    <location>
        <begin position="325"/>
        <end position="334"/>
    </location>
</feature>
<feature type="active site" description="Nucleophile" evidence="1">
    <location>
        <position position="185"/>
    </location>
</feature>
<feature type="active site" evidence="1">
    <location>
        <position position="212"/>
    </location>
</feature>
<feature type="active site" evidence="1">
    <location>
        <position position="229"/>
    </location>
</feature>
<feature type="binding site" evidence="1">
    <location>
        <position position="125"/>
    </location>
    <ligand>
        <name>Zn(2+)</name>
        <dbReference type="ChEBI" id="CHEBI:29105"/>
    </ligand>
</feature>
<feature type="binding site" evidence="1">
    <location>
        <position position="128"/>
    </location>
    <ligand>
        <name>Zn(2+)</name>
        <dbReference type="ChEBI" id="CHEBI:29105"/>
    </ligand>
</feature>
<feature type="binding site" evidence="1">
    <location>
        <position position="159"/>
    </location>
    <ligand>
        <name>Zn(2+)</name>
        <dbReference type="ChEBI" id="CHEBI:29105"/>
    </ligand>
</feature>
<feature type="binding site" evidence="1">
    <location>
        <position position="232"/>
    </location>
    <ligand>
        <name>substrate</name>
    </ligand>
</feature>
<keyword id="KW-0963">Cytoplasm</keyword>
<keyword id="KW-0378">Hydrolase</keyword>
<keyword id="KW-0479">Metal-binding</keyword>
<keyword id="KW-1185">Reference proteome</keyword>
<keyword id="KW-0862">Zinc</keyword>
<dbReference type="EC" id="3.5.1.52"/>
<dbReference type="EMBL" id="CR382125">
    <property type="protein sequence ID" value="CAH00130.1"/>
    <property type="molecule type" value="Genomic_DNA"/>
</dbReference>
<dbReference type="RefSeq" id="XP_455043.1">
    <property type="nucleotide sequence ID" value="XM_455043.1"/>
</dbReference>
<dbReference type="SMR" id="Q6CLZ6"/>
<dbReference type="FunCoup" id="Q6CLZ6">
    <property type="interactions" value="121"/>
</dbReference>
<dbReference type="STRING" id="284590.Q6CLZ6"/>
<dbReference type="PaxDb" id="284590-Q6CLZ6"/>
<dbReference type="KEGG" id="kla:KLLA0_E24223g"/>
<dbReference type="eggNOG" id="KOG0909">
    <property type="taxonomic scope" value="Eukaryota"/>
</dbReference>
<dbReference type="HOGENOM" id="CLU_031058_0_1_1"/>
<dbReference type="InParanoid" id="Q6CLZ6"/>
<dbReference type="OMA" id="AWDKPRL"/>
<dbReference type="Proteomes" id="UP000000598">
    <property type="component" value="Chromosome E"/>
</dbReference>
<dbReference type="GO" id="GO:0005829">
    <property type="term" value="C:cytosol"/>
    <property type="evidence" value="ECO:0007669"/>
    <property type="project" value="TreeGrafter"/>
</dbReference>
<dbReference type="GO" id="GO:0005634">
    <property type="term" value="C:nucleus"/>
    <property type="evidence" value="ECO:0007669"/>
    <property type="project" value="TreeGrafter"/>
</dbReference>
<dbReference type="GO" id="GO:0046872">
    <property type="term" value="F:metal ion binding"/>
    <property type="evidence" value="ECO:0007669"/>
    <property type="project" value="UniProtKB-KW"/>
</dbReference>
<dbReference type="GO" id="GO:0000224">
    <property type="term" value="F:peptide-N4-(N-acetyl-beta-glucosaminyl)asparagine amidase activity"/>
    <property type="evidence" value="ECO:0007669"/>
    <property type="project" value="UniProtKB-EC"/>
</dbReference>
<dbReference type="GO" id="GO:0006516">
    <property type="term" value="P:glycoprotein catabolic process"/>
    <property type="evidence" value="ECO:0007669"/>
    <property type="project" value="TreeGrafter"/>
</dbReference>
<dbReference type="FunFam" id="3.10.620.30:FF:000004">
    <property type="entry name" value="Peptidase (PNG1)"/>
    <property type="match status" value="1"/>
</dbReference>
<dbReference type="Gene3D" id="2.20.25.10">
    <property type="match status" value="1"/>
</dbReference>
<dbReference type="Gene3D" id="3.10.620.30">
    <property type="match status" value="2"/>
</dbReference>
<dbReference type="InterPro" id="IPR038765">
    <property type="entry name" value="Papain-like_cys_pep_sf"/>
</dbReference>
<dbReference type="InterPro" id="IPR050883">
    <property type="entry name" value="PNGase"/>
</dbReference>
<dbReference type="InterPro" id="IPR002931">
    <property type="entry name" value="Transglutaminase-like"/>
</dbReference>
<dbReference type="PANTHER" id="PTHR12143">
    <property type="entry name" value="PEPTIDE N-GLYCANASE PNGASE -RELATED"/>
    <property type="match status" value="1"/>
</dbReference>
<dbReference type="PANTHER" id="PTHR12143:SF19">
    <property type="entry name" value="PEPTIDE-N(4)-(N-ACETYL-BETA-GLUCOSAMINYL)ASPARAGINE AMIDASE"/>
    <property type="match status" value="1"/>
</dbReference>
<dbReference type="Pfam" id="PF01841">
    <property type="entry name" value="Transglut_core"/>
    <property type="match status" value="1"/>
</dbReference>
<dbReference type="SMART" id="SM00460">
    <property type="entry name" value="TGc"/>
    <property type="match status" value="1"/>
</dbReference>
<dbReference type="SUPFAM" id="SSF54001">
    <property type="entry name" value="Cysteine proteinases"/>
    <property type="match status" value="1"/>
</dbReference>
<organism>
    <name type="scientific">Kluyveromyces lactis (strain ATCC 8585 / CBS 2359 / DSM 70799 / NBRC 1267 / NRRL Y-1140 / WM37)</name>
    <name type="common">Yeast</name>
    <name type="synonym">Candida sphaerica</name>
    <dbReference type="NCBI Taxonomy" id="284590"/>
    <lineage>
        <taxon>Eukaryota</taxon>
        <taxon>Fungi</taxon>
        <taxon>Dikarya</taxon>
        <taxon>Ascomycota</taxon>
        <taxon>Saccharomycotina</taxon>
        <taxon>Saccharomycetes</taxon>
        <taxon>Saccharomycetales</taxon>
        <taxon>Saccharomycetaceae</taxon>
        <taxon>Kluyveromyces</taxon>
    </lineage>
</organism>
<sequence>MTDFQETLSSVSKRFLELYRSKILSQWRGTNGSSEEEKRFNSLIQQNGFARQIFGLYKSLCFRYENDAWYSVVLDILDLDLIYSNVDKAVQDNNASDIEYQDYLVKELLRYFKRDFFSWCNKPNCSKCGTDEHLEWVGTDRANSEEAKYQCGNVEVYRCTLTGDITRFPRYNDPIKLLQTRTGRCGEWCNVFTLILKSFGLNARYIWNKEDHVWCEYYSPNLKRWVHLDCCEQSFDEPHIYSKNWNKKMSYVLAFSNDIVADVSGRYILQNNLPRNAISENELNFMCTYLTKTLRKDFNDDQIYALACRDEQERLSLEKTKPSKDTSTTTLTGTKGRESGSTAWKQQRGEDGS</sequence>
<gene>
    <name type="primary">PNG1</name>
    <name type="ordered locus">KLLA0E24266g</name>
</gene>
<proteinExistence type="inferred from homology"/>
<comment type="function">
    <text evidence="1">Specifically deglycosylates the denatured form of N-linked glycoproteins in the cytoplasm and assists their proteasome-mediated degradation. Cleaves the beta-aspartyl-glucosamine (GlcNAc) of the glycan and the amide side chain of Asn, converting Asn to Asp. Prefers proteins containing high-mannose over those bearing complex type oligosaccharides. Can recognize misfolded proteins in the endoplasmic reticulum that are exported to the cytosol to be destroyed and deglycosylate them, while it has no activity toward native proteins. Deglycosylation is a prerequisite for subsequent proteasome-mediated degradation of some, but not all, misfolded glycoproteins (By similarity).</text>
</comment>
<comment type="catalytic activity">
    <reaction>
        <text>Hydrolysis of an N(4)-(acetyl-beta-D-glucosaminyl)asparagine residue in which the glucosamine residue may be further glycosylated, to yield a (substituted) N-acetyl-beta-D-glucosaminylamine and a peptide containing an aspartate residue.</text>
        <dbReference type="EC" id="3.5.1.52"/>
    </reaction>
</comment>
<comment type="cofactor">
    <cofactor evidence="1">
        <name>Zn(2+)</name>
        <dbReference type="ChEBI" id="CHEBI:29105"/>
    </cofactor>
    <text evidence="1">Binds 1 zinc ion per subunit.</text>
</comment>
<comment type="subcellular location">
    <subcellularLocation>
        <location evidence="1">Cytoplasm</location>
    </subcellularLocation>
</comment>
<comment type="similarity">
    <text evidence="3">Belongs to the transglutaminase-like superfamily. PNGase family.</text>
</comment>
<protein>
    <recommendedName>
        <fullName>Peptide-N(4)-(N-acetyl-beta-glucosaminyl)asparagine amidase</fullName>
        <shortName>PNGase</shortName>
        <ecNumber>3.5.1.52</ecNumber>
    </recommendedName>
    <alternativeName>
        <fullName>Peptide:N-glycanase 1</fullName>
    </alternativeName>
</protein>
<accession>Q6CLZ6</accession>
<name>PNG1_KLULA</name>
<reference key="1">
    <citation type="journal article" date="2004" name="Nature">
        <title>Genome evolution in yeasts.</title>
        <authorList>
            <person name="Dujon B."/>
            <person name="Sherman D."/>
            <person name="Fischer G."/>
            <person name="Durrens P."/>
            <person name="Casaregola S."/>
            <person name="Lafontaine I."/>
            <person name="de Montigny J."/>
            <person name="Marck C."/>
            <person name="Neuveglise C."/>
            <person name="Talla E."/>
            <person name="Goffard N."/>
            <person name="Frangeul L."/>
            <person name="Aigle M."/>
            <person name="Anthouard V."/>
            <person name="Babour A."/>
            <person name="Barbe V."/>
            <person name="Barnay S."/>
            <person name="Blanchin S."/>
            <person name="Beckerich J.-M."/>
            <person name="Beyne E."/>
            <person name="Bleykasten C."/>
            <person name="Boisrame A."/>
            <person name="Boyer J."/>
            <person name="Cattolico L."/>
            <person name="Confanioleri F."/>
            <person name="de Daruvar A."/>
            <person name="Despons L."/>
            <person name="Fabre E."/>
            <person name="Fairhead C."/>
            <person name="Ferry-Dumazet H."/>
            <person name="Groppi A."/>
            <person name="Hantraye F."/>
            <person name="Hennequin C."/>
            <person name="Jauniaux N."/>
            <person name="Joyet P."/>
            <person name="Kachouri R."/>
            <person name="Kerrest A."/>
            <person name="Koszul R."/>
            <person name="Lemaire M."/>
            <person name="Lesur I."/>
            <person name="Ma L."/>
            <person name="Muller H."/>
            <person name="Nicaud J.-M."/>
            <person name="Nikolski M."/>
            <person name="Oztas S."/>
            <person name="Ozier-Kalogeropoulos O."/>
            <person name="Pellenz S."/>
            <person name="Potier S."/>
            <person name="Richard G.-F."/>
            <person name="Straub M.-L."/>
            <person name="Suleau A."/>
            <person name="Swennen D."/>
            <person name="Tekaia F."/>
            <person name="Wesolowski-Louvel M."/>
            <person name="Westhof E."/>
            <person name="Wirth B."/>
            <person name="Zeniou-Meyer M."/>
            <person name="Zivanovic Y."/>
            <person name="Bolotin-Fukuhara M."/>
            <person name="Thierry A."/>
            <person name="Bouchier C."/>
            <person name="Caudron B."/>
            <person name="Scarpelli C."/>
            <person name="Gaillardin C."/>
            <person name="Weissenbach J."/>
            <person name="Wincker P."/>
            <person name="Souciet J.-L."/>
        </authorList>
    </citation>
    <scope>NUCLEOTIDE SEQUENCE [LARGE SCALE GENOMIC DNA]</scope>
    <source>
        <strain>ATCC 8585 / CBS 2359 / DSM 70799 / NBRC 1267 / NRRL Y-1140 / WM37</strain>
    </source>
</reference>